<sequence>MRLVLFLNMGGAMNLQDCEVFLKNMFNDPYILGIKNRFLRKFVAWIITKARVKAMQENYKKMGGKSPLNELTQSLCDKLNLKQDEFKFDFVNLYVPPFATEILQKYTLNENDEIILFPLYPHHSCTTVTSSLEILQDEISKQKIQAKVKTIDIFYKNKLYNEMIVSHILAKKNKFDAKILIFSAHSLPQSIIDKGDLYEKHVKDHVEILKEKLKDHFDEFILAYQSKLGPVKWLEPNTSDVLANLNDKALIYPISFCIDCSETIFELGMEYKHLAKCDYDLISCPNDSDEFAQFILKYLSDLN</sequence>
<keyword id="KW-0963">Cytoplasm</keyword>
<keyword id="KW-0350">Heme biosynthesis</keyword>
<keyword id="KW-0408">Iron</keyword>
<keyword id="KW-0456">Lyase</keyword>
<keyword id="KW-0479">Metal-binding</keyword>
<keyword id="KW-0627">Porphyrin biosynthesis</keyword>
<proteinExistence type="inferred from homology"/>
<protein>
    <recommendedName>
        <fullName evidence="1">Ferrochelatase</fullName>
        <ecNumber evidence="1">4.98.1.1</ecNumber>
    </recommendedName>
    <alternativeName>
        <fullName evidence="1">Heme synthase</fullName>
    </alternativeName>
    <alternativeName>
        <fullName evidence="1">Protoheme ferro-lyase</fullName>
    </alternativeName>
</protein>
<gene>
    <name evidence="1" type="primary">hemH</name>
    <name type="ordered locus">JJD26997_1433</name>
</gene>
<organism>
    <name type="scientific">Campylobacter jejuni subsp. doylei (strain ATCC BAA-1458 / RM4099 / 269.97)</name>
    <dbReference type="NCBI Taxonomy" id="360109"/>
    <lineage>
        <taxon>Bacteria</taxon>
        <taxon>Pseudomonadati</taxon>
        <taxon>Campylobacterota</taxon>
        <taxon>Epsilonproteobacteria</taxon>
        <taxon>Campylobacterales</taxon>
        <taxon>Campylobacteraceae</taxon>
        <taxon>Campylobacter</taxon>
    </lineage>
</organism>
<name>HEMH_CAMJD</name>
<evidence type="ECO:0000255" key="1">
    <source>
        <dbReference type="HAMAP-Rule" id="MF_00323"/>
    </source>
</evidence>
<feature type="chain" id="PRO_1000019287" description="Ferrochelatase">
    <location>
        <begin position="1"/>
        <end position="303"/>
    </location>
</feature>
<feature type="binding site" evidence="1">
    <location>
        <position position="185"/>
    </location>
    <ligand>
        <name>Fe cation</name>
        <dbReference type="ChEBI" id="CHEBI:24875"/>
    </ligand>
</feature>
<feature type="binding site" evidence="1">
    <location>
        <position position="262"/>
    </location>
    <ligand>
        <name>Fe cation</name>
        <dbReference type="ChEBI" id="CHEBI:24875"/>
    </ligand>
</feature>
<dbReference type="EC" id="4.98.1.1" evidence="1"/>
<dbReference type="EMBL" id="CP000768">
    <property type="protein sequence ID" value="ABS44177.1"/>
    <property type="molecule type" value="Genomic_DNA"/>
</dbReference>
<dbReference type="SMR" id="A7H4N6"/>
<dbReference type="KEGG" id="cjd:JJD26997_1433"/>
<dbReference type="HOGENOM" id="CLU_018884_4_1_7"/>
<dbReference type="UniPathway" id="UPA00252">
    <property type="reaction ID" value="UER00325"/>
</dbReference>
<dbReference type="Proteomes" id="UP000002302">
    <property type="component" value="Chromosome"/>
</dbReference>
<dbReference type="GO" id="GO:0005737">
    <property type="term" value="C:cytoplasm"/>
    <property type="evidence" value="ECO:0007669"/>
    <property type="project" value="UniProtKB-SubCell"/>
</dbReference>
<dbReference type="GO" id="GO:0004325">
    <property type="term" value="F:ferrochelatase activity"/>
    <property type="evidence" value="ECO:0007669"/>
    <property type="project" value="UniProtKB-UniRule"/>
</dbReference>
<dbReference type="GO" id="GO:0046872">
    <property type="term" value="F:metal ion binding"/>
    <property type="evidence" value="ECO:0007669"/>
    <property type="project" value="UniProtKB-KW"/>
</dbReference>
<dbReference type="GO" id="GO:0006783">
    <property type="term" value="P:heme biosynthetic process"/>
    <property type="evidence" value="ECO:0007669"/>
    <property type="project" value="UniProtKB-UniRule"/>
</dbReference>
<dbReference type="CDD" id="cd00419">
    <property type="entry name" value="Ferrochelatase_C"/>
    <property type="match status" value="1"/>
</dbReference>
<dbReference type="CDD" id="cd03411">
    <property type="entry name" value="Ferrochelatase_N"/>
    <property type="match status" value="1"/>
</dbReference>
<dbReference type="Gene3D" id="3.40.50.1400">
    <property type="match status" value="2"/>
</dbReference>
<dbReference type="HAMAP" id="MF_00323">
    <property type="entry name" value="Ferrochelatase"/>
    <property type="match status" value="1"/>
</dbReference>
<dbReference type="InterPro" id="IPR001015">
    <property type="entry name" value="Ferrochelatase"/>
</dbReference>
<dbReference type="InterPro" id="IPR019772">
    <property type="entry name" value="Ferrochelatase_AS"/>
</dbReference>
<dbReference type="InterPro" id="IPR033644">
    <property type="entry name" value="Ferrochelatase_C"/>
</dbReference>
<dbReference type="InterPro" id="IPR033659">
    <property type="entry name" value="Ferrochelatase_N"/>
</dbReference>
<dbReference type="NCBIfam" id="TIGR00109">
    <property type="entry name" value="hemH"/>
    <property type="match status" value="1"/>
</dbReference>
<dbReference type="PANTHER" id="PTHR11108">
    <property type="entry name" value="FERROCHELATASE"/>
    <property type="match status" value="1"/>
</dbReference>
<dbReference type="PANTHER" id="PTHR11108:SF1">
    <property type="entry name" value="FERROCHELATASE, MITOCHONDRIAL"/>
    <property type="match status" value="1"/>
</dbReference>
<dbReference type="Pfam" id="PF00762">
    <property type="entry name" value="Ferrochelatase"/>
    <property type="match status" value="1"/>
</dbReference>
<dbReference type="SUPFAM" id="SSF53800">
    <property type="entry name" value="Chelatase"/>
    <property type="match status" value="1"/>
</dbReference>
<dbReference type="PROSITE" id="PS00534">
    <property type="entry name" value="FERROCHELATASE"/>
    <property type="match status" value="1"/>
</dbReference>
<accession>A7H4N6</accession>
<comment type="function">
    <text evidence="1">Catalyzes the ferrous insertion into protoporphyrin IX.</text>
</comment>
<comment type="catalytic activity">
    <reaction evidence="1">
        <text>heme b + 2 H(+) = protoporphyrin IX + Fe(2+)</text>
        <dbReference type="Rhea" id="RHEA:22584"/>
        <dbReference type="ChEBI" id="CHEBI:15378"/>
        <dbReference type="ChEBI" id="CHEBI:29033"/>
        <dbReference type="ChEBI" id="CHEBI:57306"/>
        <dbReference type="ChEBI" id="CHEBI:60344"/>
        <dbReference type="EC" id="4.98.1.1"/>
    </reaction>
</comment>
<comment type="pathway">
    <text evidence="1">Porphyrin-containing compound metabolism; protoheme biosynthesis; protoheme from protoporphyrin-IX: step 1/1.</text>
</comment>
<comment type="subcellular location">
    <subcellularLocation>
        <location evidence="1">Cytoplasm</location>
    </subcellularLocation>
</comment>
<comment type="similarity">
    <text evidence="1">Belongs to the ferrochelatase family.</text>
</comment>
<reference key="1">
    <citation type="submission" date="2007-07" db="EMBL/GenBank/DDBJ databases">
        <title>Complete genome sequence of Campylobacter jejuni subsp doylei 269.97 isolated from human blood.</title>
        <authorList>
            <person name="Fouts D.E."/>
            <person name="Mongodin E.F."/>
            <person name="Puiu D."/>
            <person name="Sebastian Y."/>
            <person name="Miller W.G."/>
            <person name="Mandrell R.E."/>
            <person name="Lastovica A.J."/>
            <person name="Nelson K.E."/>
        </authorList>
    </citation>
    <scope>NUCLEOTIDE SEQUENCE [LARGE SCALE GENOMIC DNA]</scope>
    <source>
        <strain>ATCC BAA-1458 / RM4099 / 269.97</strain>
    </source>
</reference>